<organism>
    <name type="scientific">Mycobacterium tuberculosis (strain ATCC 25618 / H37Rv)</name>
    <dbReference type="NCBI Taxonomy" id="83332"/>
    <lineage>
        <taxon>Bacteria</taxon>
        <taxon>Bacillati</taxon>
        <taxon>Actinomycetota</taxon>
        <taxon>Actinomycetes</taxon>
        <taxon>Mycobacteriales</taxon>
        <taxon>Mycobacteriaceae</taxon>
        <taxon>Mycobacterium</taxon>
        <taxon>Mycobacterium tuberculosis complex</taxon>
    </lineage>
</organism>
<accession>P9WP01</accession>
<accession>L0TDR7</accession>
<accession>O53359</accession>
<accession>P0A538</accession>
<protein>
    <recommendedName>
        <fullName>Purine nucleoside phosphorylase</fullName>
        <shortName>PNP</shortName>
        <shortName>Pu-NPase</shortName>
        <ecNumber>2.4.2.1</ecNumber>
    </recommendedName>
    <alternativeName>
        <fullName>Inosine phosphorylase</fullName>
    </alternativeName>
    <alternativeName>
        <fullName>Inosine-guanosine phosphorylase</fullName>
    </alternativeName>
</protein>
<evidence type="ECO:0000250" key="1">
    <source>
        <dbReference type="UniProtKB" id="P45563"/>
    </source>
</evidence>
<evidence type="ECO:0000250" key="2">
    <source>
        <dbReference type="UniProtKB" id="P77834"/>
    </source>
</evidence>
<evidence type="ECO:0000269" key="3">
    <source>
    </source>
</evidence>
<evidence type="ECO:0000305" key="4"/>
<evidence type="ECO:0007744" key="5">
    <source>
        <dbReference type="PDB" id="1G2O"/>
    </source>
</evidence>
<evidence type="ECO:0007744" key="6">
    <source>
        <dbReference type="PDB" id="1I80"/>
    </source>
</evidence>
<evidence type="ECO:0007829" key="7">
    <source>
        <dbReference type="PDB" id="3SCZ"/>
    </source>
</evidence>
<evidence type="ECO:0007829" key="8">
    <source>
        <dbReference type="PDB" id="8C25"/>
    </source>
</evidence>
<keyword id="KW-0002">3D-structure</keyword>
<keyword id="KW-0328">Glycosyltransferase</keyword>
<keyword id="KW-1185">Reference proteome</keyword>
<keyword id="KW-0808">Transferase</keyword>
<comment type="function">
    <text evidence="2">The purine nucleoside phosphorylases catalyze the phosphorolytic breakdown of the N-glycosidic bond in the beta-(deoxy)ribonucleoside molecules, with the formation of the corresponding free purine bases and pentose-1-phosphate. Cleaves guanosine, inosine, 2'-deoxyguanosine and 2'-deoxyinosine.</text>
</comment>
<comment type="catalytic activity">
    <reaction evidence="2">
        <text>a purine 2'-deoxy-D-ribonucleoside + phosphate = a purine nucleobase + 2-deoxy-alpha-D-ribose 1-phosphate</text>
        <dbReference type="Rhea" id="RHEA:36431"/>
        <dbReference type="ChEBI" id="CHEBI:26386"/>
        <dbReference type="ChEBI" id="CHEBI:43474"/>
        <dbReference type="ChEBI" id="CHEBI:57259"/>
        <dbReference type="ChEBI" id="CHEBI:142361"/>
        <dbReference type="EC" id="2.4.2.1"/>
    </reaction>
</comment>
<comment type="pathway">
    <text>Purine metabolism; purine nucleoside salvage.</text>
</comment>
<comment type="subunit">
    <text evidence="2">Homotrimer.</text>
</comment>
<comment type="similarity">
    <text evidence="4">Belongs to the PNP/MTAP phosphorylase family.</text>
</comment>
<dbReference type="EC" id="2.4.2.1"/>
<dbReference type="EMBL" id="AL123456">
    <property type="protein sequence ID" value="CCP46126.1"/>
    <property type="molecule type" value="Genomic_DNA"/>
</dbReference>
<dbReference type="PIR" id="B70842">
    <property type="entry name" value="B70842"/>
</dbReference>
<dbReference type="RefSeq" id="NP_217824.1">
    <property type="nucleotide sequence ID" value="NC_000962.3"/>
</dbReference>
<dbReference type="RefSeq" id="WP_003417233.1">
    <property type="nucleotide sequence ID" value="NZ_NVQJ01000003.1"/>
</dbReference>
<dbReference type="PDB" id="1G2O">
    <property type="method" value="X-ray"/>
    <property type="resolution" value="1.75 A"/>
    <property type="chains" value="A/B/C=1-268"/>
</dbReference>
<dbReference type="PDB" id="1I80">
    <property type="method" value="X-ray"/>
    <property type="resolution" value="2.00 A"/>
    <property type="chains" value="A/B/C=1-268"/>
</dbReference>
<dbReference type="PDB" id="1N3I">
    <property type="method" value="X-ray"/>
    <property type="resolution" value="1.90 A"/>
    <property type="chains" value="A/B/C=1-268"/>
</dbReference>
<dbReference type="PDB" id="3IOM">
    <property type="method" value="X-ray"/>
    <property type="resolution" value="2.14 A"/>
    <property type="chains" value="A/B=1-268"/>
</dbReference>
<dbReference type="PDB" id="3IX2">
    <property type="method" value="X-ray"/>
    <property type="resolution" value="2.10 A"/>
    <property type="chains" value="A/B/C=1-268"/>
</dbReference>
<dbReference type="PDB" id="3SCZ">
    <property type="method" value="X-ray"/>
    <property type="resolution" value="1.95 A"/>
    <property type="chains" value="A/B=1-268"/>
</dbReference>
<dbReference type="PDB" id="7ZSQ">
    <property type="method" value="X-ray"/>
    <property type="resolution" value="1.77 A"/>
    <property type="chains" value="A/B/C=2-268"/>
</dbReference>
<dbReference type="PDB" id="7ZSR">
    <property type="method" value="X-ray"/>
    <property type="resolution" value="1.97 A"/>
    <property type="chains" value="A/B/C=2-268"/>
</dbReference>
<dbReference type="PDB" id="8C25">
    <property type="method" value="X-ray"/>
    <property type="resolution" value="1.56 A"/>
    <property type="chains" value="A/B=2-268"/>
</dbReference>
<dbReference type="PDBsum" id="1G2O"/>
<dbReference type="PDBsum" id="1I80"/>
<dbReference type="PDBsum" id="1N3I"/>
<dbReference type="PDBsum" id="3IOM"/>
<dbReference type="PDBsum" id="3IX2"/>
<dbReference type="PDBsum" id="3SCZ"/>
<dbReference type="PDBsum" id="7ZSQ"/>
<dbReference type="PDBsum" id="7ZSR"/>
<dbReference type="PDBsum" id="8C25"/>
<dbReference type="SMR" id="P9WP01"/>
<dbReference type="FunCoup" id="P9WP01">
    <property type="interactions" value="150"/>
</dbReference>
<dbReference type="STRING" id="83332.Rv3307"/>
<dbReference type="BindingDB" id="P9WP01"/>
<dbReference type="ChEMBL" id="CHEMBL1169594"/>
<dbReference type="DrugBank" id="DB03551">
    <property type="generic name" value="(3R,4R)-3-Hydroxy-4-(hydroxymethyl)-1-[(4-oxo-4,4a,5,7a-tetrahydro-3H-pyrrolo[3,2-d]pyrimidin-7-yl)methyl]pyrrolidinium"/>
</dbReference>
<dbReference type="DrugBank" id="DB03411">
    <property type="generic name" value="2-Hydroxymethyl-Pyrrolidine-3,4-Diol"/>
</dbReference>
<dbReference type="DrugBank" id="DB04095">
    <property type="generic name" value="9-Deazahypoxanthine"/>
</dbReference>
<dbReference type="DrugCentral" id="P9WP01"/>
<dbReference type="PaxDb" id="83332-Rv3307"/>
<dbReference type="DNASU" id="887542"/>
<dbReference type="GeneID" id="887542"/>
<dbReference type="KEGG" id="mtu:Rv3307"/>
<dbReference type="KEGG" id="mtv:RVBD_3307"/>
<dbReference type="TubercuList" id="Rv3307"/>
<dbReference type="eggNOG" id="COG0005">
    <property type="taxonomic scope" value="Bacteria"/>
</dbReference>
<dbReference type="InParanoid" id="P9WP01"/>
<dbReference type="OrthoDB" id="1523230at2"/>
<dbReference type="PhylomeDB" id="P9WP01"/>
<dbReference type="UniPathway" id="UPA00606"/>
<dbReference type="EvolutionaryTrace" id="P9WP01"/>
<dbReference type="PRO" id="PR:P9WP01"/>
<dbReference type="Proteomes" id="UP000001584">
    <property type="component" value="Chromosome"/>
</dbReference>
<dbReference type="GO" id="GO:0005737">
    <property type="term" value="C:cytoplasm"/>
    <property type="evidence" value="ECO:0000318"/>
    <property type="project" value="GO_Central"/>
</dbReference>
<dbReference type="GO" id="GO:0004731">
    <property type="term" value="F:purine-nucleoside phosphorylase activity"/>
    <property type="evidence" value="ECO:0000314"/>
    <property type="project" value="MTBBASE"/>
</dbReference>
<dbReference type="GO" id="GO:0006161">
    <property type="term" value="P:deoxyguanosine catabolic process"/>
    <property type="evidence" value="ECO:0000314"/>
    <property type="project" value="MTBBASE"/>
</dbReference>
<dbReference type="CDD" id="cd09009">
    <property type="entry name" value="PNP-EcPNPII_like"/>
    <property type="match status" value="1"/>
</dbReference>
<dbReference type="FunFam" id="3.40.50.1580:FF:000007">
    <property type="entry name" value="Purine nucleoside phosphorylase"/>
    <property type="match status" value="1"/>
</dbReference>
<dbReference type="Gene3D" id="3.40.50.1580">
    <property type="entry name" value="Nucleoside phosphorylase domain"/>
    <property type="match status" value="1"/>
</dbReference>
<dbReference type="InterPro" id="IPR000845">
    <property type="entry name" value="Nucleoside_phosphorylase_d"/>
</dbReference>
<dbReference type="InterPro" id="IPR035994">
    <property type="entry name" value="Nucleoside_phosphorylase_sf"/>
</dbReference>
<dbReference type="InterPro" id="IPR011269">
    <property type="entry name" value="PUNP"/>
</dbReference>
<dbReference type="InterPro" id="IPR011268">
    <property type="entry name" value="Purine_phosphorylase"/>
</dbReference>
<dbReference type="InterPro" id="IPR018099">
    <property type="entry name" value="Purine_phosphorylase-2_CS"/>
</dbReference>
<dbReference type="NCBIfam" id="TIGR01697">
    <property type="entry name" value="PNPH-PUNA-XAPA"/>
    <property type="match status" value="1"/>
</dbReference>
<dbReference type="NCBIfam" id="NF006054">
    <property type="entry name" value="PRK08202.1"/>
    <property type="match status" value="1"/>
</dbReference>
<dbReference type="NCBIfam" id="TIGR01698">
    <property type="entry name" value="PUNP"/>
    <property type="match status" value="1"/>
</dbReference>
<dbReference type="PANTHER" id="PTHR11904">
    <property type="entry name" value="METHYLTHIOADENOSINE/PURINE NUCLEOSIDE PHOSPHORYLASE"/>
    <property type="match status" value="1"/>
</dbReference>
<dbReference type="PANTHER" id="PTHR11904:SF9">
    <property type="entry name" value="PURINE NUCLEOSIDE PHOSPHORYLASE-RELATED"/>
    <property type="match status" value="1"/>
</dbReference>
<dbReference type="Pfam" id="PF01048">
    <property type="entry name" value="PNP_UDP_1"/>
    <property type="match status" value="1"/>
</dbReference>
<dbReference type="PIRSF" id="PIRSF000477">
    <property type="entry name" value="PurNPase"/>
    <property type="match status" value="1"/>
</dbReference>
<dbReference type="SUPFAM" id="SSF53167">
    <property type="entry name" value="Purine and uridine phosphorylases"/>
    <property type="match status" value="1"/>
</dbReference>
<dbReference type="PROSITE" id="PS01240">
    <property type="entry name" value="PNP_MTAP_2"/>
    <property type="match status" value="1"/>
</dbReference>
<gene>
    <name type="primary">punA</name>
    <name type="synonym">deoD</name>
    <name type="ordered locus">Rv3307</name>
    <name type="ORF">MTV016.06</name>
</gene>
<sequence>MADPRPDPDELARRAAQVIADRTGIGEHDVAVVLGSGWLPAVAALGSPTTVLPQAELPGFVPPTAAGHAGELLSVPIGAHRVLVLAGRIHAYEGHDLRYVVHPVRAARAAGAQIMVLTNAAGGLRADLQVGQPVLISDHLNLTARSPLVGGEFVDLTDAYSPRLRELARQSDPQLAEGVYAGLPGPHYETPAEIRMLQTLGADLVGMSTVHETIAARAAGAEVLGVSLVTNLAAGITGEPLSHAEVLAAGAASATRMGALLADVIARF</sequence>
<proteinExistence type="evidence at protein level"/>
<name>PUNA_MYCTU</name>
<reference key="1">
    <citation type="journal article" date="1998" name="Nature">
        <title>Deciphering the biology of Mycobacterium tuberculosis from the complete genome sequence.</title>
        <authorList>
            <person name="Cole S.T."/>
            <person name="Brosch R."/>
            <person name="Parkhill J."/>
            <person name="Garnier T."/>
            <person name="Churcher C.M."/>
            <person name="Harris D.E."/>
            <person name="Gordon S.V."/>
            <person name="Eiglmeier K."/>
            <person name="Gas S."/>
            <person name="Barry C.E. III"/>
            <person name="Tekaia F."/>
            <person name="Badcock K."/>
            <person name="Basham D."/>
            <person name="Brown D."/>
            <person name="Chillingworth T."/>
            <person name="Connor R."/>
            <person name="Davies R.M."/>
            <person name="Devlin K."/>
            <person name="Feltwell T."/>
            <person name="Gentles S."/>
            <person name="Hamlin N."/>
            <person name="Holroyd S."/>
            <person name="Hornsby T."/>
            <person name="Jagels K."/>
            <person name="Krogh A."/>
            <person name="McLean J."/>
            <person name="Moule S."/>
            <person name="Murphy L.D."/>
            <person name="Oliver S."/>
            <person name="Osborne J."/>
            <person name="Quail M.A."/>
            <person name="Rajandream M.A."/>
            <person name="Rogers J."/>
            <person name="Rutter S."/>
            <person name="Seeger K."/>
            <person name="Skelton S."/>
            <person name="Squares S."/>
            <person name="Squares R."/>
            <person name="Sulston J.E."/>
            <person name="Taylor K."/>
            <person name="Whitehead S."/>
            <person name="Barrell B.G."/>
        </authorList>
    </citation>
    <scope>NUCLEOTIDE SEQUENCE [LARGE SCALE GENOMIC DNA]</scope>
    <source>
        <strain>ATCC 25618 / H37Rv</strain>
    </source>
</reference>
<reference key="2">
    <citation type="journal article" date="2011" name="Mol. Cell. Proteomics">
        <title>Proteogenomic analysis of Mycobacterium tuberculosis by high resolution mass spectrometry.</title>
        <authorList>
            <person name="Kelkar D.S."/>
            <person name="Kumar D."/>
            <person name="Kumar P."/>
            <person name="Balakrishnan L."/>
            <person name="Muthusamy B."/>
            <person name="Yadav A.K."/>
            <person name="Shrivastava P."/>
            <person name="Marimuthu A."/>
            <person name="Anand S."/>
            <person name="Sundaram H."/>
            <person name="Kingsbury R."/>
            <person name="Harsha H.C."/>
            <person name="Nair B."/>
            <person name="Prasad T.S."/>
            <person name="Chauhan D.S."/>
            <person name="Katoch K."/>
            <person name="Katoch V.M."/>
            <person name="Kumar P."/>
            <person name="Chaerkady R."/>
            <person name="Ramachandran S."/>
            <person name="Dash D."/>
            <person name="Pandey A."/>
        </authorList>
    </citation>
    <scope>IDENTIFICATION BY MASS SPECTROMETRY [LARGE SCALE ANALYSIS]</scope>
    <source>
        <strain>ATCC 25618 / H37Rv</strain>
    </source>
</reference>
<reference key="3">
    <citation type="journal article" date="2001" name="Biochemistry">
        <title>Structures of purine nucleoside phosphorylase from Mycobacterium tuberculosis in complexes with immucillin-H and its pieces.</title>
        <authorList>
            <person name="Shi W."/>
            <person name="Basso L.A."/>
            <person name="Santos D.S."/>
            <person name="Tyler P.C."/>
            <person name="Furneaux R.H."/>
            <person name="Blanchard J.S."/>
            <person name="Almo S.C."/>
            <person name="Schramm V.L."/>
        </authorList>
    </citation>
    <scope>X-RAY CRYSTALLOGRAPHY (1.75 ANGSTROMS) IN COMPLEX WITH 9-DEAZAHYPOXANTHINE AND PHOSPHATE</scope>
</reference>
<feature type="chain" id="PRO_0000184544" description="Purine nucleoside phosphorylase">
    <location>
        <begin position="1"/>
        <end position="268"/>
    </location>
</feature>
<feature type="binding site" evidence="3 5 6">
    <location>
        <position position="36"/>
    </location>
    <ligand>
        <name>phosphate</name>
        <dbReference type="ChEBI" id="CHEBI:43474"/>
    </ligand>
</feature>
<feature type="binding site" evidence="1">
    <location>
        <position position="68"/>
    </location>
    <ligand>
        <name>phosphate</name>
        <dbReference type="ChEBI" id="CHEBI:43474"/>
    </ligand>
</feature>
<feature type="binding site" evidence="3 5 6">
    <location>
        <begin position="88"/>
        <end position="90"/>
    </location>
    <ligand>
        <name>phosphate</name>
        <dbReference type="ChEBI" id="CHEBI:43474"/>
    </ligand>
</feature>
<feature type="binding site" evidence="1">
    <location>
        <position position="120"/>
    </location>
    <ligand>
        <name>phosphate</name>
        <dbReference type="ChEBI" id="CHEBI:43474"/>
    </ligand>
</feature>
<feature type="binding site" evidence="3">
    <location>
        <position position="189"/>
    </location>
    <ligand>
        <name>a purine D-ribonucleoside</name>
        <dbReference type="ChEBI" id="CHEBI:142355"/>
    </ligand>
</feature>
<feature type="binding site" evidence="3 5 6">
    <location>
        <position position="208"/>
    </location>
    <ligand>
        <name>phosphate</name>
        <dbReference type="ChEBI" id="CHEBI:43474"/>
    </ligand>
</feature>
<feature type="binding site" evidence="3">
    <location>
        <position position="231"/>
    </location>
    <ligand>
        <name>a purine D-ribonucleoside</name>
        <dbReference type="ChEBI" id="CHEBI:142355"/>
    </ligand>
</feature>
<feature type="helix" evidence="8">
    <location>
        <begin position="8"/>
        <end position="23"/>
    </location>
</feature>
<feature type="strand" evidence="8">
    <location>
        <begin position="30"/>
        <end position="34"/>
    </location>
</feature>
<feature type="turn" evidence="8">
    <location>
        <begin position="36"/>
        <end position="38"/>
    </location>
</feature>
<feature type="helix" evidence="8">
    <location>
        <begin position="39"/>
        <end position="41"/>
    </location>
</feature>
<feature type="helix" evidence="8">
    <location>
        <begin position="42"/>
        <end position="45"/>
    </location>
</feature>
<feature type="strand" evidence="8">
    <location>
        <begin position="49"/>
        <end position="53"/>
    </location>
</feature>
<feature type="helix" evidence="8">
    <location>
        <begin position="54"/>
        <end position="56"/>
    </location>
</feature>
<feature type="strand" evidence="7">
    <location>
        <begin position="63"/>
        <end position="65"/>
    </location>
</feature>
<feature type="strand" evidence="8">
    <location>
        <begin position="71"/>
        <end position="77"/>
    </location>
</feature>
<feature type="strand" evidence="8">
    <location>
        <begin position="80"/>
        <end position="87"/>
    </location>
</feature>
<feature type="helix" evidence="8">
    <location>
        <begin position="91"/>
        <end position="93"/>
    </location>
</feature>
<feature type="helix" evidence="8">
    <location>
        <begin position="97"/>
        <end position="109"/>
    </location>
</feature>
<feature type="strand" evidence="8">
    <location>
        <begin position="113"/>
        <end position="123"/>
    </location>
</feature>
<feature type="strand" evidence="8">
    <location>
        <begin position="133"/>
        <end position="141"/>
    </location>
</feature>
<feature type="helix" evidence="8">
    <location>
        <begin position="162"/>
        <end position="171"/>
    </location>
</feature>
<feature type="strand" evidence="8">
    <location>
        <begin position="176"/>
        <end position="182"/>
    </location>
</feature>
<feature type="helix" evidence="8">
    <location>
        <begin position="191"/>
        <end position="200"/>
    </location>
</feature>
<feature type="strand" evidence="8">
    <location>
        <begin position="203"/>
        <end position="209"/>
    </location>
</feature>
<feature type="helix" evidence="8">
    <location>
        <begin position="210"/>
        <end position="218"/>
    </location>
</feature>
<feature type="strand" evidence="8">
    <location>
        <begin position="222"/>
        <end position="232"/>
    </location>
</feature>
<feature type="strand" evidence="8">
    <location>
        <begin position="236"/>
        <end position="239"/>
    </location>
</feature>
<feature type="helix" evidence="8">
    <location>
        <begin position="243"/>
        <end position="252"/>
    </location>
</feature>
<feature type="helix" evidence="8">
    <location>
        <begin position="254"/>
        <end position="266"/>
    </location>
</feature>